<sequence>MANSIQDALYLSFEREQWAELRKSVPLTLSEAELTQLKGMNEKLSLDEVTDIYLPLSRLLNLIVGAKQQRGLVIDKFLSQQAPKSPYIISIAGSVAVGKSTTARILQTLLQRWPEHPKVDLVTTDGFLYPLAELKRKGLLQRKGFPESYDTKLLGEFISAVKSGDNNVKVPLYSHITYDRLTDQHQVIAQPDIIILEGLNVLQTGLDTLVETRRPFVSDFVDFSIYVDADESLLKDWYQQRFLQFRHGAFNDPRSFFHHYATLSDGEANAIAANIWDTINGPNLQLNIQPTRERAKLILKKGKDHLISQVLMRR</sequence>
<proteinExistence type="inferred from homology"/>
<comment type="catalytic activity">
    <reaction evidence="1">
        <text>(R)-pantothenate + ATP = (R)-4'-phosphopantothenate + ADP + H(+)</text>
        <dbReference type="Rhea" id="RHEA:16373"/>
        <dbReference type="ChEBI" id="CHEBI:10986"/>
        <dbReference type="ChEBI" id="CHEBI:15378"/>
        <dbReference type="ChEBI" id="CHEBI:29032"/>
        <dbReference type="ChEBI" id="CHEBI:30616"/>
        <dbReference type="ChEBI" id="CHEBI:456216"/>
        <dbReference type="EC" id="2.7.1.33"/>
    </reaction>
</comment>
<comment type="pathway">
    <text evidence="1">Cofactor biosynthesis; coenzyme A biosynthesis; CoA from (R)-pantothenate: step 1/5.</text>
</comment>
<comment type="subcellular location">
    <subcellularLocation>
        <location evidence="1">Cytoplasm</location>
    </subcellularLocation>
</comment>
<comment type="similarity">
    <text evidence="1">Belongs to the prokaryotic pantothenate kinase family.</text>
</comment>
<dbReference type="EC" id="2.7.1.33" evidence="1"/>
<dbReference type="EMBL" id="CP000302">
    <property type="protein sequence ID" value="ABE53453.1"/>
    <property type="molecule type" value="Genomic_DNA"/>
</dbReference>
<dbReference type="RefSeq" id="WP_011494622.1">
    <property type="nucleotide sequence ID" value="NC_007954.1"/>
</dbReference>
<dbReference type="SMR" id="Q12SX3"/>
<dbReference type="STRING" id="318161.Sden_0156"/>
<dbReference type="KEGG" id="sdn:Sden_0156"/>
<dbReference type="eggNOG" id="COG1072">
    <property type="taxonomic scope" value="Bacteria"/>
</dbReference>
<dbReference type="HOGENOM" id="CLU_053818_1_1_6"/>
<dbReference type="OrthoDB" id="1550976at2"/>
<dbReference type="UniPathway" id="UPA00241">
    <property type="reaction ID" value="UER00352"/>
</dbReference>
<dbReference type="Proteomes" id="UP000001982">
    <property type="component" value="Chromosome"/>
</dbReference>
<dbReference type="GO" id="GO:0005737">
    <property type="term" value="C:cytoplasm"/>
    <property type="evidence" value="ECO:0007669"/>
    <property type="project" value="UniProtKB-SubCell"/>
</dbReference>
<dbReference type="GO" id="GO:0005524">
    <property type="term" value="F:ATP binding"/>
    <property type="evidence" value="ECO:0007669"/>
    <property type="project" value="UniProtKB-UniRule"/>
</dbReference>
<dbReference type="GO" id="GO:0004594">
    <property type="term" value="F:pantothenate kinase activity"/>
    <property type="evidence" value="ECO:0007669"/>
    <property type="project" value="UniProtKB-UniRule"/>
</dbReference>
<dbReference type="GO" id="GO:0015937">
    <property type="term" value="P:coenzyme A biosynthetic process"/>
    <property type="evidence" value="ECO:0007669"/>
    <property type="project" value="UniProtKB-UniRule"/>
</dbReference>
<dbReference type="CDD" id="cd02025">
    <property type="entry name" value="PanK"/>
    <property type="match status" value="1"/>
</dbReference>
<dbReference type="FunFam" id="3.40.50.300:FF:000242">
    <property type="entry name" value="Pantothenate kinase"/>
    <property type="match status" value="1"/>
</dbReference>
<dbReference type="Gene3D" id="3.40.50.300">
    <property type="entry name" value="P-loop containing nucleotide triphosphate hydrolases"/>
    <property type="match status" value="1"/>
</dbReference>
<dbReference type="HAMAP" id="MF_00215">
    <property type="entry name" value="Pantothen_kinase_1"/>
    <property type="match status" value="1"/>
</dbReference>
<dbReference type="InterPro" id="IPR027417">
    <property type="entry name" value="P-loop_NTPase"/>
</dbReference>
<dbReference type="InterPro" id="IPR004566">
    <property type="entry name" value="PanK"/>
</dbReference>
<dbReference type="InterPro" id="IPR006083">
    <property type="entry name" value="PRK/URK"/>
</dbReference>
<dbReference type="NCBIfam" id="TIGR00554">
    <property type="entry name" value="panK_bact"/>
    <property type="match status" value="1"/>
</dbReference>
<dbReference type="PANTHER" id="PTHR10285">
    <property type="entry name" value="URIDINE KINASE"/>
    <property type="match status" value="1"/>
</dbReference>
<dbReference type="Pfam" id="PF00485">
    <property type="entry name" value="PRK"/>
    <property type="match status" value="1"/>
</dbReference>
<dbReference type="PIRSF" id="PIRSF000545">
    <property type="entry name" value="Pantothenate_kin"/>
    <property type="match status" value="1"/>
</dbReference>
<dbReference type="SUPFAM" id="SSF52540">
    <property type="entry name" value="P-loop containing nucleoside triphosphate hydrolases"/>
    <property type="match status" value="1"/>
</dbReference>
<reference key="1">
    <citation type="submission" date="2006-03" db="EMBL/GenBank/DDBJ databases">
        <title>Complete sequence of Shewanella denitrificans OS217.</title>
        <authorList>
            <consortium name="US DOE Joint Genome Institute"/>
            <person name="Copeland A."/>
            <person name="Lucas S."/>
            <person name="Lapidus A."/>
            <person name="Barry K."/>
            <person name="Detter J.C."/>
            <person name="Glavina del Rio T."/>
            <person name="Hammon N."/>
            <person name="Israni S."/>
            <person name="Dalin E."/>
            <person name="Tice H."/>
            <person name="Pitluck S."/>
            <person name="Brettin T."/>
            <person name="Bruce D."/>
            <person name="Han C."/>
            <person name="Tapia R."/>
            <person name="Gilna P."/>
            <person name="Kiss H."/>
            <person name="Schmutz J."/>
            <person name="Larimer F."/>
            <person name="Land M."/>
            <person name="Hauser L."/>
            <person name="Kyrpides N."/>
            <person name="Lykidis A."/>
            <person name="Richardson P."/>
        </authorList>
    </citation>
    <scope>NUCLEOTIDE SEQUENCE [LARGE SCALE GENOMIC DNA]</scope>
    <source>
        <strain>OS217 / ATCC BAA-1090 / DSM 15013</strain>
    </source>
</reference>
<evidence type="ECO:0000255" key="1">
    <source>
        <dbReference type="HAMAP-Rule" id="MF_00215"/>
    </source>
</evidence>
<accession>Q12SX3</accession>
<name>COAA_SHEDO</name>
<keyword id="KW-0067">ATP-binding</keyword>
<keyword id="KW-0173">Coenzyme A biosynthesis</keyword>
<keyword id="KW-0963">Cytoplasm</keyword>
<keyword id="KW-0418">Kinase</keyword>
<keyword id="KW-0547">Nucleotide-binding</keyword>
<keyword id="KW-1185">Reference proteome</keyword>
<keyword id="KW-0808">Transferase</keyword>
<protein>
    <recommendedName>
        <fullName evidence="1">Pantothenate kinase</fullName>
        <ecNumber evidence="1">2.7.1.33</ecNumber>
    </recommendedName>
    <alternativeName>
        <fullName evidence="1">Pantothenic acid kinase</fullName>
    </alternativeName>
</protein>
<feature type="chain" id="PRO_0000325564" description="Pantothenate kinase">
    <location>
        <begin position="1"/>
        <end position="314"/>
    </location>
</feature>
<feature type="binding site" evidence="1">
    <location>
        <begin position="93"/>
        <end position="100"/>
    </location>
    <ligand>
        <name>ATP</name>
        <dbReference type="ChEBI" id="CHEBI:30616"/>
    </ligand>
</feature>
<gene>
    <name evidence="1" type="primary">coaA</name>
    <name type="ordered locus">Sden_0156</name>
</gene>
<organism>
    <name type="scientific">Shewanella denitrificans (strain OS217 / ATCC BAA-1090 / DSM 15013)</name>
    <dbReference type="NCBI Taxonomy" id="318161"/>
    <lineage>
        <taxon>Bacteria</taxon>
        <taxon>Pseudomonadati</taxon>
        <taxon>Pseudomonadota</taxon>
        <taxon>Gammaproteobacteria</taxon>
        <taxon>Alteromonadales</taxon>
        <taxon>Shewanellaceae</taxon>
        <taxon>Shewanella</taxon>
    </lineage>
</organism>